<reference evidence="12" key="1">
    <citation type="journal article" date="2013" name="J. Proteomics">
        <title>The 'Vampirome': Transcriptome and proteome analysis of the principal and accessory submaxillary glands of the vampire bat Desmodus rotundus, a vector of human rabies.</title>
        <authorList>
            <person name="Francischetti I.M."/>
            <person name="Assumpcao T.C."/>
            <person name="Ma D."/>
            <person name="Li Y."/>
            <person name="Vicente E.C."/>
            <person name="Uieda W."/>
            <person name="Ribeiro J.M."/>
        </authorList>
    </citation>
    <scope>NUCLEOTIDE SEQUENCE [MRNA]</scope>
    <source>
        <tissue evidence="12">Salivary gland</tissue>
    </source>
</reference>
<reference evidence="13" key="2">
    <citation type="journal article" date="2013" name="J. Proteomics">
        <title>Dracula's children: molecular evolution of vampire bat venom.</title>
        <authorList>
            <person name="Low D.H."/>
            <person name="Sunagar K."/>
            <person name="Undheim E.A."/>
            <person name="Ali S.A."/>
            <person name="Alagon A.C."/>
            <person name="Ruder T."/>
            <person name="Jackson T.N."/>
            <person name="Pineda Gonzalez S."/>
            <person name="King G.F."/>
            <person name="Jones A."/>
            <person name="Antunes A."/>
            <person name="Fry B.G."/>
        </authorList>
    </citation>
    <scope>NUCLEOTIDE SEQUENCE [MRNA] OF 1-388</scope>
    <scope>IDENTIFICATION BY MASS SPECTROMETRY</scope>
    <scope>SUBCELLULAR LOCATION</scope>
    <scope>TISSUE SPECIFICITY</scope>
</reference>
<reference evidence="11" key="3">
    <citation type="journal article" date="1995" name="Thromb. Haemost.">
        <title>Purification and partial characterization of draculin, the anticoagulant factor present in the saliva of vampire bats (Desmodus rotundus).</title>
        <authorList>
            <person name="Apitz-Castro R."/>
            <person name="Beguin S."/>
            <person name="Tablante A."/>
            <person name="Bartoli F."/>
            <person name="Holt J.C."/>
            <person name="Hemker H.C."/>
        </authorList>
    </citation>
    <scope>PROTEIN SEQUENCE OF 20-32</scope>
    <scope>FUNCTION</scope>
    <scope>SUBUNIT</scope>
    <scope>SUBCELLULAR LOCATION</scope>
    <scope>TISSUE SPECIFICITY</scope>
    <scope>DISULFIDE BONDS</scope>
</reference>
<reference evidence="11" key="4">
    <citation type="journal article" date="1998" name="Biochim. Biophys. Acta">
        <title>Expression of biological activity of draculin, the anticoagulant factor from vampire bat saliva, is strictly dependent on the appropriate glycosylation of the native molecule.</title>
        <authorList>
            <person name="Fernandez A.Z."/>
            <person name="Tablante A."/>
            <person name="Bartoli F."/>
            <person name="Beguin S."/>
            <person name="Hemker H.C."/>
            <person name="Apitz-Castro R."/>
        </authorList>
    </citation>
    <scope>FUNCTION</scope>
    <scope>SUBCELLULAR LOCATION</scope>
    <scope>TISSUE SPECIFICITY</scope>
    <scope>GLYCOSYLATION</scope>
</reference>
<reference evidence="11" key="5">
    <citation type="journal article" date="1999" name="Biochim. Biophys. Acta">
        <title>Draculin, the anticoagulant factor in vampire bat saliva, is a tight-binding, noncompetitive inhibitor of activated factor X.</title>
        <authorList>
            <person name="Fernandez A.Z."/>
            <person name="Tablante A."/>
            <person name="Beguin S."/>
            <person name="Hemker H.C."/>
            <person name="Apitz-Castro R."/>
        </authorList>
    </citation>
    <scope>FUNCTION</scope>
    <scope>INTERACTION WITH COAGULATION FACTOR X</scope>
    <scope>SUBCELLULAR LOCATION</scope>
    <scope>TISSUE SPECIFICITY</scope>
</reference>
<feature type="signal peptide" evidence="7">
    <location>
        <begin position="1"/>
        <end position="19"/>
    </location>
</feature>
<feature type="chain" id="PRO_5003930826" description="Lactotransferrin" evidence="7">
    <location>
        <begin position="20"/>
        <end position="708"/>
    </location>
</feature>
<feature type="domain" description="Transferrin-like 1" evidence="4">
    <location>
        <begin position="25"/>
        <end position="352"/>
    </location>
</feature>
<feature type="domain" description="Transferrin-like 2" evidence="4">
    <location>
        <begin position="364"/>
        <end position="693"/>
    </location>
</feature>
<feature type="active site" evidence="1">
    <location>
        <position position="92"/>
    </location>
</feature>
<feature type="active site" description="Nucleophile" evidence="1">
    <location>
        <position position="278"/>
    </location>
</feature>
<feature type="binding site" evidence="4">
    <location>
        <position position="79"/>
    </location>
    <ligand>
        <name>Fe(3+)</name>
        <dbReference type="ChEBI" id="CHEBI:29034"/>
        <label>1</label>
    </ligand>
</feature>
<feature type="binding site" evidence="4">
    <location>
        <position position="111"/>
    </location>
    <ligand>
        <name>Fe(3+)</name>
        <dbReference type="ChEBI" id="CHEBI:29034"/>
        <label>1</label>
    </ligand>
</feature>
<feature type="binding site" evidence="4">
    <location>
        <position position="136"/>
    </location>
    <ligand>
        <name>hydrogencarbonate</name>
        <dbReference type="ChEBI" id="CHEBI:17544"/>
        <label>1</label>
    </ligand>
</feature>
<feature type="binding site" evidence="4">
    <location>
        <position position="140"/>
    </location>
    <ligand>
        <name>hydrogencarbonate</name>
        <dbReference type="ChEBI" id="CHEBI:17544"/>
        <label>1</label>
    </ligand>
</feature>
<feature type="binding site" evidence="4">
    <location>
        <position position="142"/>
    </location>
    <ligand>
        <name>hydrogencarbonate</name>
        <dbReference type="ChEBI" id="CHEBI:17544"/>
        <label>1</label>
    </ligand>
</feature>
<feature type="binding site" evidence="4">
    <location>
        <position position="143"/>
    </location>
    <ligand>
        <name>hydrogencarbonate</name>
        <dbReference type="ChEBI" id="CHEBI:17544"/>
        <label>1</label>
    </ligand>
</feature>
<feature type="binding site" evidence="4">
    <location>
        <position position="211"/>
    </location>
    <ligand>
        <name>Fe(3+)</name>
        <dbReference type="ChEBI" id="CHEBI:29034"/>
        <label>1</label>
    </ligand>
</feature>
<feature type="binding site" evidence="4">
    <location>
        <position position="272"/>
    </location>
    <ligand>
        <name>Fe(3+)</name>
        <dbReference type="ChEBI" id="CHEBI:29034"/>
        <label>1</label>
    </ligand>
</feature>
<feature type="binding site" evidence="4">
    <location>
        <position position="414"/>
    </location>
    <ligand>
        <name>Fe(3+)</name>
        <dbReference type="ChEBI" id="CHEBI:29034"/>
        <label>2</label>
    </ligand>
</feature>
<feature type="binding site" evidence="4">
    <location>
        <position position="452"/>
    </location>
    <ligand>
        <name>Fe(3+)</name>
        <dbReference type="ChEBI" id="CHEBI:29034"/>
        <label>2</label>
    </ligand>
</feature>
<feature type="binding site" evidence="4">
    <location>
        <position position="478"/>
    </location>
    <ligand>
        <name>hydrogencarbonate</name>
        <dbReference type="ChEBI" id="CHEBI:17544"/>
        <label>2</label>
    </ligand>
</feature>
<feature type="binding site" evidence="4">
    <location>
        <position position="482"/>
    </location>
    <ligand>
        <name>hydrogencarbonate</name>
        <dbReference type="ChEBI" id="CHEBI:17544"/>
        <label>2</label>
    </ligand>
</feature>
<feature type="binding site" evidence="4">
    <location>
        <position position="484"/>
    </location>
    <ligand>
        <name>hydrogencarbonate</name>
        <dbReference type="ChEBI" id="CHEBI:17544"/>
        <label>2</label>
    </ligand>
</feature>
<feature type="binding site" evidence="4">
    <location>
        <position position="485"/>
    </location>
    <ligand>
        <name>hydrogencarbonate</name>
        <dbReference type="ChEBI" id="CHEBI:17544"/>
        <label>2</label>
    </ligand>
</feature>
<feature type="binding site" evidence="4">
    <location>
        <position position="545"/>
    </location>
    <ligand>
        <name>Fe(3+)</name>
        <dbReference type="ChEBI" id="CHEBI:29034"/>
        <label>2</label>
    </ligand>
</feature>
<feature type="binding site" evidence="4">
    <location>
        <position position="614"/>
    </location>
    <ligand>
        <name>Fe(3+)</name>
        <dbReference type="ChEBI" id="CHEBI:29034"/>
        <label>2</label>
    </ligand>
</feature>
<feature type="glycosylation site" description="N-linked (GlcNAc...) asparagine" evidence="3">
    <location>
        <position position="139"/>
    </location>
</feature>
<feature type="glycosylation site" description="N-linked (GlcNAc...) asparagine" evidence="3">
    <location>
        <position position="385"/>
    </location>
</feature>
<feature type="glycosylation site" description="N-linked (GlcNAc...) asparagine" evidence="3">
    <location>
        <position position="495"/>
    </location>
</feature>
<feature type="disulfide bond" evidence="4">
    <location>
        <begin position="28"/>
        <end position="64"/>
    </location>
</feature>
<feature type="disulfide bond" evidence="4">
    <location>
        <begin position="38"/>
        <end position="55"/>
    </location>
</feature>
<feature type="disulfide bond" evidence="4">
    <location>
        <begin position="134"/>
        <end position="217"/>
    </location>
</feature>
<feature type="disulfide bond" evidence="4">
    <location>
        <begin position="176"/>
        <end position="192"/>
    </location>
</feature>
<feature type="disulfide bond" evidence="4">
    <location>
        <begin position="179"/>
        <end position="202"/>
    </location>
</feature>
<feature type="disulfide bond" evidence="4">
    <location>
        <begin position="189"/>
        <end position="200"/>
    </location>
</feature>
<feature type="disulfide bond" evidence="4">
    <location>
        <begin position="250"/>
        <end position="264"/>
    </location>
</feature>
<feature type="disulfide bond" evidence="4">
    <location>
        <begin position="367"/>
        <end position="399"/>
    </location>
</feature>
<feature type="disulfide bond" evidence="4">
    <location>
        <begin position="377"/>
        <end position="390"/>
    </location>
</feature>
<feature type="disulfide bond" evidence="4">
    <location>
        <begin position="476"/>
        <end position="551"/>
    </location>
</feature>
<feature type="disulfide bond" evidence="4">
    <location>
        <begin position="510"/>
        <end position="524"/>
    </location>
</feature>
<feature type="disulfide bond" evidence="4">
    <location>
        <begin position="521"/>
        <end position="534"/>
    </location>
</feature>
<feature type="disulfide bond" evidence="4">
    <location>
        <begin position="592"/>
        <end position="606"/>
    </location>
</feature>
<feature type="sequence conflict" description="In Ref. 2; JAA65087." evidence="11" ref="2">
    <original>KESAAEVEARGARVVWCAVGPEELRKCQQWSGQSNGTV</original>
    <variation>NGIGSRGGDPGGPGLCGARWAQRSCASASSGVARAMGQ</variation>
    <location>
        <begin position="351"/>
        <end position="388"/>
    </location>
</feature>
<accession>K9IMD0</accession>
<accession>M0QRM3</accession>
<sequence>MKLLFLALLSLLALGPSLAARRRGVRWCTISKPEAAKCSKLQQNLKRVRGPSLSCISRKSYLECIQAIAAKRADAMSLDAGLVYEAGQDPYRLRPVAAEVYGTEGAPRTHYYAVALVKKDSNLQLNQLQGVRSCHTGLNRSAGWKIPVGTLRPYLGWAGPPAPLQEAVANFFSASCVPCADGNQYPNLCRLCAGTGADKCACSSKEPYFGYSGAFKCLKDGAGDVAFVKDSTVFENLPNKAERDQYELLCPDNTRKPVDEFEQCHLARVPSHAVVARSVGGKEDSIWRLLSKAQEKFGKGTSGSFQLFSSPPGQKDLLFKDGAQGFLRIPSRVDAELYLGPSYLTVIKNLKESAAEVEARGARVVWCAVGPEELRKCQQWSGQSNGTVTCTTAADTEDCIALVLKGEADAMSLDGGVIYIAGKCGLAPVLAESQRSEGGSNLDCVNRPLEGDRAVAVVRKSSAGLTWNSRRGTKSCHTAVGRTAGWNIPMGLLFNQTRSCNFDEFFSQSCAPGADPNSNLCALCVGNEQGQDKCAPNSNERYFSYAGSFRCLVENAGDVAFVKASTVLENPDGRGTEAWAKDLKLEDFELLCLDGTRKPVSEFETCHLARAPSHGVVSRKDRVQYLEQVLLDQQGKFGRNGPLCPGKFCLFQSETKNLLFNDNTECLAKLQGKTTYEKYLGPEYVTAVANLRQCSTSPLLEACTFLRN</sequence>
<gene>
    <name evidence="1" type="primary">LTF</name>
</gene>
<comment type="function">
    <text evidence="1">Transferrins are iron binding transport proteins which can bind two Fe(3+) ions in association with the binding of an anion, usually bicarbonate.</text>
</comment>
<comment type="function">
    <molecule>Lactotransferrin</molecule>
    <text evidence="1">Major iron-binding and multifunctional protein found in exocrine fluids such as breast milk and mucosal secretions. Has antimicrobial activity. Antimicrobial properties may include bacteriostasis, which is related to its ability to sequester free iron and thus inhibit microbial growth, as well as direct bactericidal properties leading to the release of lipopolysaccharides from the bacterial outer membrane. May have anabolic, differentiating and anti-apoptotic effects on osteoblasts and may also inhibit osteoclastogenesis, possibly playing a role in the regulation of bone growth. May interfere with the lipopolysaccharide (LPS)-stimulated TLR4 signaling.</text>
</comment>
<comment type="function">
    <text evidence="1">The lactotransferrin transferrin-like domain 1 functions as a serine protease of the peptidase S60 family that cuts arginine rich regions. This function contributes to the antimicrobial activity. Shows a preferential cleavage at -Arg-Ser-Arg-Arg-|- and -Arg-Arg-Ser-Arg-|-, and of Z-Phe-Arg-|-aminomethylcoumarin sites.</text>
</comment>
<comment type="function">
    <text evidence="5 7 8">Acts as an anticoagulant of the blood coagulation cascade of the bat's prey by inhibiting coagulation factor IX and activated coagulation factor X.</text>
</comment>
<comment type="subunit">
    <text evidence="1 5 7">Monomer (PubMed:7740503). Found in a complex with LTF, CLU, EPPIN and SEMG1 (By similarity). Interacts with prey activated coagulation factor X; the interaction inhibits coagulation factor X catalytic activity (PubMed:10556567). Found in a complex with MPO and LTF; interacts directly with CP, allows Fe(3+) incorporation into LTF and activation of CP ferroxidase activity (By similarity).</text>
</comment>
<comment type="subcellular location">
    <subcellularLocation>
        <location evidence="5 6 7 8">Secreted</location>
    </subcellularLocation>
</comment>
<comment type="tissue specificity">
    <text evidence="5 6 7 8">Expressed in the submaxillary gland and secreted in the saliva (at protein level).</text>
</comment>
<comment type="PTM">
    <text evidence="8">N-glycosylated (PubMed:9795244). Glycosylation is important for draculin anticoagulant activity (PubMed:9795244). Probably also O-glycosylated (PubMed:9795244).</text>
</comment>
<comment type="similarity">
    <text evidence="2">Belongs to the transferrin family.</text>
</comment>
<name>TRLF_DESRO</name>
<evidence type="ECO:0000250" key="1">
    <source>
        <dbReference type="UniProtKB" id="P02788"/>
    </source>
</evidence>
<evidence type="ECO:0000255" key="2">
    <source>
        <dbReference type="PIRNR" id="PIRNR002549"/>
    </source>
</evidence>
<evidence type="ECO:0000255" key="3">
    <source>
        <dbReference type="PROSITE-ProRule" id="PRU00498"/>
    </source>
</evidence>
<evidence type="ECO:0000255" key="4">
    <source>
        <dbReference type="PROSITE-ProRule" id="PRU00741"/>
    </source>
</evidence>
<evidence type="ECO:0000269" key="5">
    <source>
    </source>
</evidence>
<evidence type="ECO:0000269" key="6">
    <source>
    </source>
</evidence>
<evidence type="ECO:0000269" key="7">
    <source>
    </source>
</evidence>
<evidence type="ECO:0000269" key="8">
    <source>
    </source>
</evidence>
<evidence type="ECO:0000303" key="9">
    <source>
    </source>
</evidence>
<evidence type="ECO:0000303" key="10">
    <source>
    </source>
</evidence>
<evidence type="ECO:0000305" key="11"/>
<evidence type="ECO:0000312" key="12">
    <source>
        <dbReference type="EMBL" id="JAA48810.1"/>
    </source>
</evidence>
<evidence type="ECO:0000312" key="13">
    <source>
        <dbReference type="EMBL" id="JAA65087.1"/>
    </source>
</evidence>
<dbReference type="EC" id="3.4.21.-" evidence="1"/>
<dbReference type="EMBL" id="GABZ01004715">
    <property type="protein sequence ID" value="JAA48810.1"/>
    <property type="molecule type" value="mRNA"/>
</dbReference>
<dbReference type="EMBL" id="GAEE01000036">
    <property type="protein sequence ID" value="JAA65087.1"/>
    <property type="molecule type" value="mRNA"/>
</dbReference>
<dbReference type="SMR" id="K9IMD0"/>
<dbReference type="GlyCosmos" id="K9IMD0">
    <property type="glycosylation" value="3 sites, No reported glycans"/>
</dbReference>
<dbReference type="GO" id="GO:0005769">
    <property type="term" value="C:early endosome"/>
    <property type="evidence" value="ECO:0007669"/>
    <property type="project" value="TreeGrafter"/>
</dbReference>
<dbReference type="GO" id="GO:0005615">
    <property type="term" value="C:extracellular space"/>
    <property type="evidence" value="ECO:0000314"/>
    <property type="project" value="UniProtKB"/>
</dbReference>
<dbReference type="GO" id="GO:0005886">
    <property type="term" value="C:plasma membrane"/>
    <property type="evidence" value="ECO:0007669"/>
    <property type="project" value="TreeGrafter"/>
</dbReference>
<dbReference type="GO" id="GO:0055037">
    <property type="term" value="C:recycling endosome"/>
    <property type="evidence" value="ECO:0007669"/>
    <property type="project" value="TreeGrafter"/>
</dbReference>
<dbReference type="GO" id="GO:0046872">
    <property type="term" value="F:metal ion binding"/>
    <property type="evidence" value="ECO:0007669"/>
    <property type="project" value="UniProtKB-KW"/>
</dbReference>
<dbReference type="GO" id="GO:0008236">
    <property type="term" value="F:serine-type peptidase activity"/>
    <property type="evidence" value="ECO:0007669"/>
    <property type="project" value="UniProtKB-KW"/>
</dbReference>
<dbReference type="GO" id="GO:0090729">
    <property type="term" value="F:toxin activity"/>
    <property type="evidence" value="ECO:0007669"/>
    <property type="project" value="UniProtKB-KW"/>
</dbReference>
<dbReference type="GO" id="GO:0019731">
    <property type="term" value="P:antibacterial humoral response"/>
    <property type="evidence" value="ECO:0007669"/>
    <property type="project" value="TreeGrafter"/>
</dbReference>
<dbReference type="GO" id="GO:0006826">
    <property type="term" value="P:iron ion transport"/>
    <property type="evidence" value="ECO:0007669"/>
    <property type="project" value="UniProtKB-KW"/>
</dbReference>
<dbReference type="GO" id="GO:0030195">
    <property type="term" value="P:negative regulation of blood coagulation"/>
    <property type="evidence" value="ECO:0000314"/>
    <property type="project" value="UniProtKB"/>
</dbReference>
<dbReference type="GO" id="GO:0001503">
    <property type="term" value="P:ossification"/>
    <property type="evidence" value="ECO:0007669"/>
    <property type="project" value="UniProtKB-KW"/>
</dbReference>
<dbReference type="GO" id="GO:0006508">
    <property type="term" value="P:proteolysis"/>
    <property type="evidence" value="ECO:0007669"/>
    <property type="project" value="UniProtKB-KW"/>
</dbReference>
<dbReference type="CDD" id="cd13617">
    <property type="entry name" value="PBP2_transferrin_C"/>
    <property type="match status" value="1"/>
</dbReference>
<dbReference type="CDD" id="cd13618">
    <property type="entry name" value="PBP2_transferrin_N"/>
    <property type="match status" value="1"/>
</dbReference>
<dbReference type="FunFam" id="3.40.190.10:FF:000095">
    <property type="entry name" value="Lactotransferrin"/>
    <property type="match status" value="1"/>
</dbReference>
<dbReference type="FunFam" id="3.40.190.10:FF:000105">
    <property type="entry name" value="Serotransferrin"/>
    <property type="match status" value="1"/>
</dbReference>
<dbReference type="Gene3D" id="3.40.190.10">
    <property type="entry name" value="Periplasmic binding protein-like II"/>
    <property type="match status" value="4"/>
</dbReference>
<dbReference type="InterPro" id="IPR016357">
    <property type="entry name" value="Transferrin"/>
</dbReference>
<dbReference type="InterPro" id="IPR001156">
    <property type="entry name" value="Transferrin-like_dom"/>
</dbReference>
<dbReference type="InterPro" id="IPR018195">
    <property type="entry name" value="Transferrin_Fe_BS"/>
</dbReference>
<dbReference type="PANTHER" id="PTHR11485:SF55">
    <property type="entry name" value="LACTOTRANSFERRIN"/>
    <property type="match status" value="1"/>
</dbReference>
<dbReference type="PANTHER" id="PTHR11485">
    <property type="entry name" value="TRANSFERRIN"/>
    <property type="match status" value="1"/>
</dbReference>
<dbReference type="Pfam" id="PF00405">
    <property type="entry name" value="Transferrin"/>
    <property type="match status" value="2"/>
</dbReference>
<dbReference type="PIRSF" id="PIRSF002549">
    <property type="entry name" value="Transferrin"/>
    <property type="match status" value="1"/>
</dbReference>
<dbReference type="PRINTS" id="PR00422">
    <property type="entry name" value="TRANSFERRIN"/>
</dbReference>
<dbReference type="SMART" id="SM00094">
    <property type="entry name" value="TR_FER"/>
    <property type="match status" value="2"/>
</dbReference>
<dbReference type="SUPFAM" id="SSF53850">
    <property type="entry name" value="Periplasmic binding protein-like II"/>
    <property type="match status" value="2"/>
</dbReference>
<dbReference type="PROSITE" id="PS00206">
    <property type="entry name" value="TRANSFERRIN_LIKE_2"/>
    <property type="match status" value="1"/>
</dbReference>
<dbReference type="PROSITE" id="PS00207">
    <property type="entry name" value="TRANSFERRIN_LIKE_3"/>
    <property type="match status" value="2"/>
</dbReference>
<dbReference type="PROSITE" id="PS51408">
    <property type="entry name" value="TRANSFERRIN_LIKE_4"/>
    <property type="match status" value="2"/>
</dbReference>
<organism evidence="12">
    <name type="scientific">Desmodus rotundus</name>
    <name type="common">Vampire bat</name>
    <dbReference type="NCBI Taxonomy" id="9430"/>
    <lineage>
        <taxon>Eukaryota</taxon>
        <taxon>Metazoa</taxon>
        <taxon>Chordata</taxon>
        <taxon>Craniata</taxon>
        <taxon>Vertebrata</taxon>
        <taxon>Euteleostomi</taxon>
        <taxon>Mammalia</taxon>
        <taxon>Eutheria</taxon>
        <taxon>Laurasiatheria</taxon>
        <taxon>Chiroptera</taxon>
        <taxon>Yangochiroptera</taxon>
        <taxon>Phyllostomidae</taxon>
        <taxon>Desmodontinae</taxon>
        <taxon>Desmodus</taxon>
    </lineage>
</organism>
<proteinExistence type="evidence at protein level"/>
<protein>
    <recommendedName>
        <fullName evidence="11">Lactotransferrin</fullName>
        <shortName evidence="11">Lactoferrin</shortName>
        <ecNumber evidence="1">3.4.21.-</ecNumber>
    </recommendedName>
    <alternativeName>
        <fullName evidence="10">Draculin</fullName>
    </alternativeName>
    <alternativeName>
        <fullName evidence="9">Draculin-1</fullName>
    </alternativeName>
</protein>
<keyword id="KW-0044">Antibiotic</keyword>
<keyword id="KW-0929">Antimicrobial</keyword>
<keyword id="KW-1203">Blood coagulation cascade inhibiting toxin</keyword>
<keyword id="KW-0903">Direct protein sequencing</keyword>
<keyword id="KW-1015">Disulfide bond</keyword>
<keyword id="KW-0325">Glycoprotein</keyword>
<keyword id="KW-1199">Hemostasis impairing toxin</keyword>
<keyword id="KW-0378">Hydrolase</keyword>
<keyword id="KW-0391">Immunity</keyword>
<keyword id="KW-0406">Ion transport</keyword>
<keyword id="KW-0408">Iron</keyword>
<keyword id="KW-0410">Iron transport</keyword>
<keyword id="KW-0479">Metal-binding</keyword>
<keyword id="KW-0892">Osteogenesis</keyword>
<keyword id="KW-0645">Protease</keyword>
<keyword id="KW-0677">Repeat</keyword>
<keyword id="KW-0964">Secreted</keyword>
<keyword id="KW-0720">Serine protease</keyword>
<keyword id="KW-0732">Signal</keyword>
<keyword id="KW-0800">Toxin</keyword>
<keyword id="KW-0813">Transport</keyword>